<evidence type="ECO:0000255" key="1">
    <source>
        <dbReference type="HAMAP-Rule" id="MF_01147"/>
    </source>
</evidence>
<sequence>MLDPIAIQLGPLAIRWYALCIVTGLILAVYLTMKEAPRKKIIPDDILDFILVAFPLAILGARLYYVIFRFDYYSQNLGEIFAIWNGGLAIYGGLITGALVLYIFADRKLINTWDFLDIAAPSVMIAQSLGRWGNFFNQEAYGATVDNLDYLPGFIRDQMYIEGSYRQPTFLYESLWNLLGFALILIFRRKWKSLRRGHITAFYLIWYGFGRMVIEGMRTDSLMFFGLRVSQWLSVVLIGLGIMIVIYQNRKKAPYYITEEEN</sequence>
<keyword id="KW-1003">Cell membrane</keyword>
<keyword id="KW-0472">Membrane</keyword>
<keyword id="KW-0808">Transferase</keyword>
<keyword id="KW-0812">Transmembrane</keyword>
<keyword id="KW-1133">Transmembrane helix</keyword>
<proteinExistence type="inferred from homology"/>
<dbReference type="EC" id="2.5.1.145" evidence="1"/>
<dbReference type="EMBL" id="CP000920">
    <property type="protein sequence ID" value="ACO21073.1"/>
    <property type="molecule type" value="Genomic_DNA"/>
</dbReference>
<dbReference type="RefSeq" id="WP_000886663.1">
    <property type="nucleotide sequence ID" value="NC_012467.1"/>
</dbReference>
<dbReference type="SMR" id="C1CLC0"/>
<dbReference type="GeneID" id="45653330"/>
<dbReference type="KEGG" id="spp:SPP_1431"/>
<dbReference type="HOGENOM" id="CLU_013386_0_1_9"/>
<dbReference type="UniPathway" id="UPA00664"/>
<dbReference type="GO" id="GO:0005886">
    <property type="term" value="C:plasma membrane"/>
    <property type="evidence" value="ECO:0007669"/>
    <property type="project" value="UniProtKB-SubCell"/>
</dbReference>
<dbReference type="GO" id="GO:0008961">
    <property type="term" value="F:phosphatidylglycerol-prolipoprotein diacylglyceryl transferase activity"/>
    <property type="evidence" value="ECO:0007669"/>
    <property type="project" value="UniProtKB-UniRule"/>
</dbReference>
<dbReference type="GO" id="GO:0042158">
    <property type="term" value="P:lipoprotein biosynthetic process"/>
    <property type="evidence" value="ECO:0007669"/>
    <property type="project" value="UniProtKB-UniRule"/>
</dbReference>
<dbReference type="HAMAP" id="MF_01147">
    <property type="entry name" value="Lgt"/>
    <property type="match status" value="1"/>
</dbReference>
<dbReference type="InterPro" id="IPR001640">
    <property type="entry name" value="Lgt"/>
</dbReference>
<dbReference type="NCBIfam" id="TIGR00544">
    <property type="entry name" value="lgt"/>
    <property type="match status" value="1"/>
</dbReference>
<dbReference type="PANTHER" id="PTHR30589:SF0">
    <property type="entry name" value="PHOSPHATIDYLGLYCEROL--PROLIPOPROTEIN DIACYLGLYCERYL TRANSFERASE"/>
    <property type="match status" value="1"/>
</dbReference>
<dbReference type="PANTHER" id="PTHR30589">
    <property type="entry name" value="PROLIPOPROTEIN DIACYLGLYCERYL TRANSFERASE"/>
    <property type="match status" value="1"/>
</dbReference>
<dbReference type="Pfam" id="PF01790">
    <property type="entry name" value="LGT"/>
    <property type="match status" value="1"/>
</dbReference>
<dbReference type="PROSITE" id="PS01311">
    <property type="entry name" value="LGT"/>
    <property type="match status" value="1"/>
</dbReference>
<reference key="1">
    <citation type="journal article" date="2010" name="Genome Biol.">
        <title>Structure and dynamics of the pan-genome of Streptococcus pneumoniae and closely related species.</title>
        <authorList>
            <person name="Donati C."/>
            <person name="Hiller N.L."/>
            <person name="Tettelin H."/>
            <person name="Muzzi A."/>
            <person name="Croucher N.J."/>
            <person name="Angiuoli S.V."/>
            <person name="Oggioni M."/>
            <person name="Dunning Hotopp J.C."/>
            <person name="Hu F.Z."/>
            <person name="Riley D.R."/>
            <person name="Covacci A."/>
            <person name="Mitchell T.J."/>
            <person name="Bentley S.D."/>
            <person name="Kilian M."/>
            <person name="Ehrlich G.D."/>
            <person name="Rappuoli R."/>
            <person name="Moxon E.R."/>
            <person name="Masignani V."/>
        </authorList>
    </citation>
    <scope>NUCLEOTIDE SEQUENCE [LARGE SCALE GENOMIC DNA]</scope>
    <source>
        <strain>P1031</strain>
    </source>
</reference>
<comment type="function">
    <text evidence="1">Catalyzes the transfer of the diacylglyceryl group from phosphatidylglycerol to the sulfhydryl group of the N-terminal cysteine of a prolipoprotein, the first step in the formation of mature lipoproteins.</text>
</comment>
<comment type="catalytic activity">
    <reaction evidence="1">
        <text>L-cysteinyl-[prolipoprotein] + a 1,2-diacyl-sn-glycero-3-phospho-(1'-sn-glycerol) = an S-1,2-diacyl-sn-glyceryl-L-cysteinyl-[prolipoprotein] + sn-glycerol 1-phosphate + H(+)</text>
        <dbReference type="Rhea" id="RHEA:56712"/>
        <dbReference type="Rhea" id="RHEA-COMP:14679"/>
        <dbReference type="Rhea" id="RHEA-COMP:14680"/>
        <dbReference type="ChEBI" id="CHEBI:15378"/>
        <dbReference type="ChEBI" id="CHEBI:29950"/>
        <dbReference type="ChEBI" id="CHEBI:57685"/>
        <dbReference type="ChEBI" id="CHEBI:64716"/>
        <dbReference type="ChEBI" id="CHEBI:140658"/>
        <dbReference type="EC" id="2.5.1.145"/>
    </reaction>
</comment>
<comment type="pathway">
    <text evidence="1">Protein modification; lipoprotein biosynthesis (diacylglyceryl transfer).</text>
</comment>
<comment type="subcellular location">
    <subcellularLocation>
        <location evidence="1">Cell membrane</location>
        <topology evidence="1">Multi-pass membrane protein</topology>
    </subcellularLocation>
</comment>
<comment type="similarity">
    <text evidence="1">Belongs to the Lgt family.</text>
</comment>
<organism>
    <name type="scientific">Streptococcus pneumoniae (strain P1031)</name>
    <dbReference type="NCBI Taxonomy" id="488223"/>
    <lineage>
        <taxon>Bacteria</taxon>
        <taxon>Bacillati</taxon>
        <taxon>Bacillota</taxon>
        <taxon>Bacilli</taxon>
        <taxon>Lactobacillales</taxon>
        <taxon>Streptococcaceae</taxon>
        <taxon>Streptococcus</taxon>
    </lineage>
</organism>
<protein>
    <recommendedName>
        <fullName evidence="1">Phosphatidylglycerol--prolipoprotein diacylglyceryl transferase</fullName>
        <ecNumber evidence="1">2.5.1.145</ecNumber>
    </recommendedName>
</protein>
<feature type="chain" id="PRO_1000164154" description="Phosphatidylglycerol--prolipoprotein diacylglyceryl transferase">
    <location>
        <begin position="1"/>
        <end position="262"/>
    </location>
</feature>
<feature type="transmembrane region" description="Helical" evidence="1">
    <location>
        <begin position="9"/>
        <end position="29"/>
    </location>
</feature>
<feature type="transmembrane region" description="Helical" evidence="1">
    <location>
        <begin position="41"/>
        <end position="61"/>
    </location>
</feature>
<feature type="transmembrane region" description="Helical" evidence="1">
    <location>
        <begin position="80"/>
        <end position="100"/>
    </location>
</feature>
<feature type="transmembrane region" description="Helical" evidence="1">
    <location>
        <begin position="109"/>
        <end position="129"/>
    </location>
</feature>
<feature type="transmembrane region" description="Helical" evidence="1">
    <location>
        <begin position="167"/>
        <end position="187"/>
    </location>
</feature>
<feature type="transmembrane region" description="Helical" evidence="1">
    <location>
        <begin position="197"/>
        <end position="217"/>
    </location>
</feature>
<feature type="transmembrane region" description="Helical" evidence="1">
    <location>
        <begin position="226"/>
        <end position="246"/>
    </location>
</feature>
<feature type="binding site" evidence="1">
    <location>
        <position position="131"/>
    </location>
    <ligand>
        <name>a 1,2-diacyl-sn-glycero-3-phospho-(1'-sn-glycerol)</name>
        <dbReference type="ChEBI" id="CHEBI:64716"/>
    </ligand>
</feature>
<name>LGT_STRZP</name>
<gene>
    <name evidence="1" type="primary">lgt</name>
    <name type="ordered locus">SPP_1431</name>
</gene>
<accession>C1CLC0</accession>